<organism>
    <name type="scientific">Chlamydomonas reinhardtii</name>
    <name type="common">Chlamydomonas smithii</name>
    <dbReference type="NCBI Taxonomy" id="3055"/>
    <lineage>
        <taxon>Eukaryota</taxon>
        <taxon>Viridiplantae</taxon>
        <taxon>Chlorophyta</taxon>
        <taxon>core chlorophytes</taxon>
        <taxon>Chlorophyceae</taxon>
        <taxon>CS clade</taxon>
        <taxon>Chlamydomonadales</taxon>
        <taxon>Chlamydomonadaceae</taxon>
        <taxon>Chlamydomonas</taxon>
    </lineage>
</organism>
<name>IFT56_CHLRE</name>
<accession>A8JA42</accession>
<feature type="chain" id="PRO_0000431684" description="Intraflagellar transport protein 56">
    <location>
        <begin position="1"/>
        <end position="555"/>
    </location>
</feature>
<feature type="repeat" description="TPR 1" evidence="2">
    <location>
        <begin position="57"/>
        <end position="90"/>
    </location>
</feature>
<feature type="repeat" description="TPR 2" evidence="2">
    <location>
        <begin position="151"/>
        <end position="184"/>
    </location>
</feature>
<feature type="repeat" description="TPR 3" evidence="2">
    <location>
        <begin position="393"/>
        <end position="426"/>
    </location>
</feature>
<keyword id="KW-0002">3D-structure</keyword>
<keyword id="KW-0966">Cell projection</keyword>
<keyword id="KW-0969">Cilium</keyword>
<keyword id="KW-0282">Flagellum</keyword>
<keyword id="KW-0653">Protein transport</keyword>
<keyword id="KW-0677">Repeat</keyword>
<keyword id="KW-0802">TPR repeat</keyword>
<keyword id="KW-0813">Transport</keyword>
<reference key="1">
    <citation type="journal article" date="2007" name="Science">
        <title>The Chlamydomonas genome reveals the evolution of key animal and plant functions.</title>
        <authorList>
            <person name="Merchant S.S."/>
            <person name="Prochnik S.E."/>
            <person name="Vallon O."/>
            <person name="Harris E.H."/>
            <person name="Karpowicz S.J."/>
            <person name="Witman G.B."/>
            <person name="Terry A."/>
            <person name="Salamov A."/>
            <person name="Fritz-Laylin L.K."/>
            <person name="Marechal-Drouard L."/>
            <person name="Marshall W.F."/>
            <person name="Qu L.H."/>
            <person name="Nelson D.R."/>
            <person name="Sanderfoot A.A."/>
            <person name="Spalding M.H."/>
            <person name="Kapitonov V.V."/>
            <person name="Ren Q."/>
            <person name="Ferris P."/>
            <person name="Lindquist E."/>
            <person name="Shapiro H."/>
            <person name="Lucas S.M."/>
            <person name="Grimwood J."/>
            <person name="Schmutz J."/>
            <person name="Cardol P."/>
            <person name="Cerutti H."/>
            <person name="Chanfreau G."/>
            <person name="Chen C.L."/>
            <person name="Cognat V."/>
            <person name="Croft M.T."/>
            <person name="Dent R."/>
            <person name="Dutcher S."/>
            <person name="Fernandez E."/>
            <person name="Fukuzawa H."/>
            <person name="Gonzalez-Ballester D."/>
            <person name="Gonzalez-Halphen D."/>
            <person name="Hallmann A."/>
            <person name="Hanikenne M."/>
            <person name="Hippler M."/>
            <person name="Inwood W."/>
            <person name="Jabbari K."/>
            <person name="Kalanon M."/>
            <person name="Kuras R."/>
            <person name="Lefebvre P.A."/>
            <person name="Lemaire S.D."/>
            <person name="Lobanov A.V."/>
            <person name="Lohr M."/>
            <person name="Manuell A."/>
            <person name="Meier I."/>
            <person name="Mets L."/>
            <person name="Mittag M."/>
            <person name="Mittelmeier T."/>
            <person name="Moroney J.V."/>
            <person name="Moseley J."/>
            <person name="Napoli C."/>
            <person name="Nedelcu A.M."/>
            <person name="Niyogi K."/>
            <person name="Novoselov S.V."/>
            <person name="Paulsen I.T."/>
            <person name="Pazour G.J."/>
            <person name="Purton S."/>
            <person name="Ral J.P."/>
            <person name="Riano-Pachon D.M."/>
            <person name="Riekhof W."/>
            <person name="Rymarquis L."/>
            <person name="Schroda M."/>
            <person name="Stern D."/>
            <person name="Umen J."/>
            <person name="Willows R."/>
            <person name="Wilson N."/>
            <person name="Zimmer S.L."/>
            <person name="Allmer J."/>
            <person name="Balk J."/>
            <person name="Bisova K."/>
            <person name="Chen C.J."/>
            <person name="Elias M."/>
            <person name="Gendler K."/>
            <person name="Hauser C."/>
            <person name="Lamb M.R."/>
            <person name="Ledford H."/>
            <person name="Long J.C."/>
            <person name="Minagawa J."/>
            <person name="Page M.D."/>
            <person name="Pan J."/>
            <person name="Pootakham W."/>
            <person name="Roje S."/>
            <person name="Rose A."/>
            <person name="Stahlberg E."/>
            <person name="Terauchi A.M."/>
            <person name="Yang P."/>
            <person name="Ball S."/>
            <person name="Bowler C."/>
            <person name="Dieckmann C.L."/>
            <person name="Gladyshev V.N."/>
            <person name="Green P."/>
            <person name="Jorgensen R."/>
            <person name="Mayfield S."/>
            <person name="Mueller-Roeber B."/>
            <person name="Rajamani S."/>
            <person name="Sayre R.T."/>
            <person name="Brokstein P."/>
            <person name="Dubchak I."/>
            <person name="Goodstein D."/>
            <person name="Hornick L."/>
            <person name="Huang Y.W."/>
            <person name="Jhaveri J."/>
            <person name="Luo Y."/>
            <person name="Martinez D."/>
            <person name="Ngau W.C."/>
            <person name="Otillar B."/>
            <person name="Poliakov A."/>
            <person name="Porter A."/>
            <person name="Szajkowski L."/>
            <person name="Werner G."/>
            <person name="Zhou K."/>
            <person name="Grigoriev I.V."/>
            <person name="Rokhsar D.S."/>
            <person name="Grossman A.R."/>
        </authorList>
    </citation>
    <scope>NUCLEOTIDE SEQUENCE [LARGE SCALE GENOMIC DNA]</scope>
    <source>
        <strain>CC-503</strain>
    </source>
</reference>
<reference key="2">
    <citation type="journal article" date="2014" name="Elife">
        <title>TTC26/DYF13 is an intraflagellar transport protein required for transport of motility-related proteins into flagella.</title>
        <authorList>
            <person name="Ishikawa H."/>
            <person name="Ide T."/>
            <person name="Yagi T."/>
            <person name="Jiang X."/>
            <person name="Hirono M."/>
            <person name="Sasaki H."/>
            <person name="Yanagisawa H."/>
            <person name="Wemmer K.A."/>
            <person name="Stainier D.Y."/>
            <person name="Qin H."/>
            <person name="Kamiya R."/>
            <person name="Marshall W.F."/>
        </authorList>
    </citation>
    <scope>FUNCTION</scope>
    <scope>SUBCELLULAR LOCATION</scope>
    <scope>IDENTIFICATION IN THE IFT COMPLEX B</scope>
    <scope>DISRUPTION PHENOTYPE</scope>
</reference>
<reference key="3">
    <citation type="journal article" date="2014" name="Elife">
        <authorList>
            <person name="Ishikawa H."/>
            <person name="Ide T."/>
            <person name="Yagi T."/>
            <person name="Jiang X."/>
            <person name="Hirono M."/>
            <person name="Sasaki H."/>
            <person name="Yanagisawa H."/>
            <person name="Wemmer K.A."/>
            <person name="Stainier D.Y."/>
            <person name="Qin H."/>
            <person name="Kamiya R."/>
            <person name="Marshall W.F."/>
        </authorList>
    </citation>
    <scope>ERRATUM OF PUBMED:24596149</scope>
</reference>
<evidence type="ECO:0000250" key="1">
    <source>
        <dbReference type="UniProtKB" id="Q95QT8"/>
    </source>
</evidence>
<evidence type="ECO:0000255" key="2"/>
<evidence type="ECO:0000269" key="3">
    <source>
    </source>
</evidence>
<evidence type="ECO:0000303" key="4">
    <source>
    </source>
</evidence>
<evidence type="ECO:0000305" key="5"/>
<evidence type="ECO:0000312" key="6">
    <source>
        <dbReference type="EMBL" id="EDO99269.1"/>
    </source>
</evidence>
<dbReference type="EMBL" id="DS496148">
    <property type="protein sequence ID" value="EDO99269.1"/>
    <property type="molecule type" value="Genomic_DNA"/>
</dbReference>
<dbReference type="RefSeq" id="XP_001698769.1">
    <property type="nucleotide sequence ID" value="XM_001698717.1"/>
</dbReference>
<dbReference type="PDB" id="8BD7">
    <property type="method" value="EM"/>
    <property type="resolution" value="9.90 A"/>
    <property type="chains" value="E/O=1-555"/>
</dbReference>
<dbReference type="PDBsum" id="8BD7"/>
<dbReference type="EMDB" id="EMD-15977"/>
<dbReference type="SMR" id="A8JA42"/>
<dbReference type="PaxDb" id="3055-EDO99269"/>
<dbReference type="eggNOG" id="KOG3785">
    <property type="taxonomic scope" value="Eukaryota"/>
</dbReference>
<dbReference type="HOGENOM" id="CLU_036306_2_0_1"/>
<dbReference type="GO" id="GO:0030992">
    <property type="term" value="C:intraciliary transport particle B"/>
    <property type="evidence" value="ECO:0000314"/>
    <property type="project" value="UniProtKB"/>
</dbReference>
<dbReference type="GO" id="GO:0031514">
    <property type="term" value="C:motile cilium"/>
    <property type="evidence" value="ECO:0000314"/>
    <property type="project" value="UniProtKB"/>
</dbReference>
<dbReference type="GO" id="GO:0042073">
    <property type="term" value="P:intraciliary transport"/>
    <property type="evidence" value="ECO:0000315"/>
    <property type="project" value="UniProtKB"/>
</dbReference>
<dbReference type="GO" id="GO:0015031">
    <property type="term" value="P:protein transport"/>
    <property type="evidence" value="ECO:0007669"/>
    <property type="project" value="UniProtKB-KW"/>
</dbReference>
<dbReference type="FunFam" id="1.25.40.10:FF:000372">
    <property type="entry name" value="Tetratricopeptide repeat domain 26"/>
    <property type="match status" value="1"/>
</dbReference>
<dbReference type="FunFam" id="1.25.40.10:FF:001373">
    <property type="entry name" value="Tetratricopeptide repeat domain 26"/>
    <property type="match status" value="1"/>
</dbReference>
<dbReference type="Gene3D" id="1.25.40.10">
    <property type="entry name" value="Tetratricopeptide repeat domain"/>
    <property type="match status" value="3"/>
</dbReference>
<dbReference type="InterPro" id="IPR011990">
    <property type="entry name" value="TPR-like_helical_dom_sf"/>
</dbReference>
<dbReference type="InterPro" id="IPR030511">
    <property type="entry name" value="TTC26"/>
</dbReference>
<dbReference type="PANTHER" id="PTHR14781">
    <property type="entry name" value="INTRAFLAGELLAR TRANSPORT PROTEIN 56"/>
    <property type="match status" value="1"/>
</dbReference>
<dbReference type="PANTHER" id="PTHR14781:SF0">
    <property type="entry name" value="INTRAFLAGELLAR TRANSPORT PROTEIN 56"/>
    <property type="match status" value="1"/>
</dbReference>
<dbReference type="Pfam" id="PF12895">
    <property type="entry name" value="ANAPC3"/>
    <property type="match status" value="1"/>
</dbReference>
<dbReference type="SUPFAM" id="SSF48452">
    <property type="entry name" value="TPR-like"/>
    <property type="match status" value="2"/>
</dbReference>
<sequence length="555" mass="63404">MFYSKSRPQHAARTNVAQAAANEKPKVPELEEFLTKRDYLGAIALLSFRRHANRNDLKNLEWLAYCYFHYGEHDKALVIYKELLQHEDPDPMFFVYSAACLYYMGMYKEAEEQALQGPKCALQTRILFHSAQRQGNDDKLMAYHGQLTDSIEDQLTLASIHYQRSHFQEATDIYKRLLLEHRDYLRSTVVYVALCYCKLDYYDVSLEILGVYLSAFPDSAIAVNLKACNHFRMYNGKAAEAELKTLAELSGGQHLDHDLIRHNLVVFRGGENALQVLPPLSDIPPEARLNLVIHHLRHHEVGEAFGLIKDMEPSTPPEFILKAVVHAMLGQVKGDPEHLKKAQQYYQLVGASASECDTIPGRQCMASCFFLLKQFEDVLVFLSSIKTYFLNDDDFNWNLGIAKAATGKYKEAEETLLQIANDKYRNEYTYTSWLARCYIMNGKARLAWERYLQLETNDESYQLLLLIANDCYKMGAFYFACKAFDVLERLDPAPEYLEGKKGAACGAFQMIVAGKEPKDLLRDVISLLRGNNSADQCEPIVAVMRKWAKNNGVKL</sequence>
<protein>
    <recommendedName>
        <fullName evidence="4">Intraflagellar transport protein 56</fullName>
    </recommendedName>
    <alternativeName>
        <fullName evidence="1">Abnormal dye filling protein 13</fullName>
    </alternativeName>
    <alternativeName>
        <fullName>Tetratricopeptide repeat protein 26 homolog</fullName>
        <shortName>TPR repeat protein 26 homolog</shortName>
    </alternativeName>
</protein>
<gene>
    <name evidence="4" type="primary">DYF13</name>
    <name evidence="4" type="synonym">IFT56</name>
    <name evidence="6" type="ORF">CHLREDRAFT_81760</name>
</gene>
<comment type="function">
    <text evidence="3">Component of the intraflagellar transport (IFT) complex B required for transport of proteins in the motile cilium. Required for transport of specific ciliary cargo proteins related to motility, while it is neither required for IFT complex B assembly or motion nor for cilium assembly.</text>
</comment>
<comment type="subunit">
    <text evidence="3">Component of the IFT complex B.</text>
</comment>
<comment type="subcellular location">
    <subcellularLocation>
        <location evidence="3">Cell projection</location>
        <location evidence="3">Cilium</location>
        <location evidence="3">Flagellum</location>
    </subcellularLocation>
</comment>
<comment type="disruption phenotype">
    <text evidence="3">Flagella motility defects.</text>
</comment>
<comment type="similarity">
    <text evidence="5">Belongs to the IFT56 family.</text>
</comment>
<proteinExistence type="evidence at protein level"/>